<evidence type="ECO:0000250" key="1">
    <source>
        <dbReference type="UniProtKB" id="O61374"/>
    </source>
</evidence>
<evidence type="ECO:0000255" key="2">
    <source>
        <dbReference type="PROSITE-ProRule" id="PRU00176"/>
    </source>
</evidence>
<evidence type="ECO:0000269" key="3">
    <source>
    </source>
</evidence>
<evidence type="ECO:0000305" key="4"/>
<dbReference type="EMBL" id="AF110846">
    <property type="protein sequence ID" value="AAF15091.1"/>
    <property type="molecule type" value="Genomic_DNA"/>
</dbReference>
<dbReference type="EMBL" id="AF110846">
    <property type="protein sequence ID" value="AAF15092.1"/>
    <property type="molecule type" value="Genomic_DNA"/>
</dbReference>
<dbReference type="EMBL" id="AJ000546">
    <property type="protein sequence ID" value="CAA04179.2"/>
    <property type="molecule type" value="mRNA"/>
</dbReference>
<dbReference type="EMBL" id="AJ245662">
    <property type="protein sequence ID" value="CAC01696.1"/>
    <property type="molecule type" value="mRNA"/>
</dbReference>
<dbReference type="EMBL" id="X98769">
    <property type="protein sequence ID" value="CAB61832.1"/>
    <property type="molecule type" value="mRNA"/>
</dbReference>
<dbReference type="EMBL" id="X98770">
    <property type="protein sequence ID" value="CAB61830.1"/>
    <property type="molecule type" value="mRNA"/>
</dbReference>
<dbReference type="EMBL" id="X98771">
    <property type="protein sequence ID" value="CAB61831.1"/>
    <property type="molecule type" value="mRNA"/>
</dbReference>
<dbReference type="SMR" id="O01671"/>
<dbReference type="STRING" id="36166.O01671"/>
<dbReference type="Proteomes" id="UP000015102">
    <property type="component" value="Unassembled WGS sequence"/>
</dbReference>
<dbReference type="GO" id="GO:0005634">
    <property type="term" value="C:nucleus"/>
    <property type="evidence" value="ECO:0007669"/>
    <property type="project" value="UniProtKB-SubCell"/>
</dbReference>
<dbReference type="GO" id="GO:1990904">
    <property type="term" value="C:ribonucleoprotein complex"/>
    <property type="evidence" value="ECO:0007669"/>
    <property type="project" value="InterPro"/>
</dbReference>
<dbReference type="GO" id="GO:0003729">
    <property type="term" value="F:mRNA binding"/>
    <property type="evidence" value="ECO:0007669"/>
    <property type="project" value="TreeGrafter"/>
</dbReference>
<dbReference type="GO" id="GO:0000380">
    <property type="term" value="P:alternative mRNA splicing, via spliceosome"/>
    <property type="evidence" value="ECO:0007669"/>
    <property type="project" value="InterPro"/>
</dbReference>
<dbReference type="GO" id="GO:0007530">
    <property type="term" value="P:sex determination"/>
    <property type="evidence" value="ECO:0007669"/>
    <property type="project" value="InterPro"/>
</dbReference>
<dbReference type="FunFam" id="3.30.70.330:FF:000205">
    <property type="entry name" value="Sex lethal, isoform B"/>
    <property type="match status" value="1"/>
</dbReference>
<dbReference type="FunFam" id="3.30.70.330:FF:000383">
    <property type="entry name" value="Sex lethal, isoform D"/>
    <property type="match status" value="1"/>
</dbReference>
<dbReference type="Gene3D" id="3.30.70.330">
    <property type="match status" value="2"/>
</dbReference>
<dbReference type="InterPro" id="IPR050502">
    <property type="entry name" value="Euk_RNA-bind_prot"/>
</dbReference>
<dbReference type="InterPro" id="IPR002343">
    <property type="entry name" value="Hud_Sxl_RNA"/>
</dbReference>
<dbReference type="InterPro" id="IPR012677">
    <property type="entry name" value="Nucleotide-bd_a/b_plait_sf"/>
</dbReference>
<dbReference type="InterPro" id="IPR035979">
    <property type="entry name" value="RBD_domain_sf"/>
</dbReference>
<dbReference type="InterPro" id="IPR000504">
    <property type="entry name" value="RRM_dom"/>
</dbReference>
<dbReference type="InterPro" id="IPR006546">
    <property type="entry name" value="Sxl"/>
</dbReference>
<dbReference type="NCBIfam" id="TIGR01659">
    <property type="entry name" value="sex-lethal"/>
    <property type="match status" value="1"/>
</dbReference>
<dbReference type="PANTHER" id="PTHR48025">
    <property type="entry name" value="OS02G0815200 PROTEIN"/>
    <property type="match status" value="1"/>
</dbReference>
<dbReference type="PANTHER" id="PTHR48025:SF1">
    <property type="entry name" value="RRM DOMAIN-CONTAINING PROTEIN"/>
    <property type="match status" value="1"/>
</dbReference>
<dbReference type="Pfam" id="PF00076">
    <property type="entry name" value="RRM_1"/>
    <property type="match status" value="2"/>
</dbReference>
<dbReference type="PRINTS" id="PR00961">
    <property type="entry name" value="HUDSXLRNA"/>
</dbReference>
<dbReference type="SMART" id="SM00360">
    <property type="entry name" value="RRM"/>
    <property type="match status" value="2"/>
</dbReference>
<dbReference type="SUPFAM" id="SSF54928">
    <property type="entry name" value="RNA-binding domain, RBD"/>
    <property type="match status" value="2"/>
</dbReference>
<dbReference type="PROSITE" id="PS50102">
    <property type="entry name" value="RRM"/>
    <property type="match status" value="2"/>
</dbReference>
<reference key="1">
    <citation type="journal article" date="2000" name="Genome">
        <title>Sequence conservation and expression of the sex-lethal homologue in the fly Megaselia scalaris.</title>
        <authorList>
            <person name="Sievert V."/>
            <person name="Kuhn S."/>
            <person name="Paululat A."/>
            <person name="Traut W."/>
        </authorList>
    </citation>
    <scope>NUCLEOTIDE SEQUENCE (ISOFORMS 1; 2; 3 AND 4)</scope>
    <scope>TISSUE SPECIFICITY</scope>
    <source>
        <strain>Wien</strain>
    </source>
</reference>
<comment type="function">
    <text evidence="1">Unknown; apparently not involved in somatic sex determination.</text>
</comment>
<comment type="subcellular location">
    <subcellularLocation>
        <location evidence="1">Nucleus</location>
    </subcellularLocation>
</comment>
<comment type="alternative products">
    <event type="alternative splicing"/>
    <isoform>
        <id>O01671-1</id>
        <name>1</name>
        <sequence type="displayed"/>
    </isoform>
    <isoform>
        <id>O01671-2</id>
        <name>2</name>
        <sequence type="described" ref="VSP_007188 VSP_007190"/>
    </isoform>
    <isoform>
        <id>O01671-3</id>
        <name>3</name>
        <sequence type="described" ref="VSP_007189"/>
    </isoform>
    <isoform>
        <id>O01671-4</id>
        <name>4</name>
        <sequence type="described" ref="VSP_007190"/>
    </isoform>
    <text>Additional isoforms seem to exist. The event occurs in a sex-independent manner.</text>
</comment>
<comment type="tissue specificity">
    <text evidence="3">Expressed in gonads and somatic tissues of both sexes. In the ovary, expressed in the last egg chamber of each ovariole. Highly expressed in nurse cells with low expression found in oocytes. Highly expressed in testis with lower expression in testis sheath and vas deferentia.</text>
</comment>
<sequence length="321" mass="35738">MYRGGRMWGMSHSLPSGMSSYAFSPQDTDFSSYPSTIGRQHSQQSQRYYQNNNCGLGSVGNMANSTNSLNSGTNNSGTNLIVNYLPQDMQDRELYSLFRTIGPINTCRIMRDYKTGYSYGYGFVDFGSEADALRAINNLNGITVRNKRIKVSFARPGGEQLRDTNLYVTNLSRSITDEQLETIFGKYGQIVQKNILRDKHTGTPRGVAFIRFNKREEAQEAISALNNVIPEGGTQPLTVRVAEEHGKSKGHVYMAPNQPPHGNMGHGNMGNMGHGNMGMAGGSGMNLNNMNAFNGMNQMVHRGRQKHSYQRKIHPYNPNFL</sequence>
<feature type="chain" id="PRO_0000081969" description="Sex-lethal homolog">
    <location>
        <begin position="1"/>
        <end position="321"/>
    </location>
</feature>
<feature type="domain" description="RRM 1" evidence="2">
    <location>
        <begin position="78"/>
        <end position="156"/>
    </location>
</feature>
<feature type="domain" description="RRM 2" evidence="2">
    <location>
        <begin position="164"/>
        <end position="244"/>
    </location>
</feature>
<feature type="splice variant" id="VSP_007189" description="In isoform 3." evidence="4">
    <location>
        <begin position="1"/>
        <end position="61"/>
    </location>
</feature>
<feature type="splice variant" id="VSP_007188" description="In isoform 2." evidence="4">
    <location>
        <begin position="1"/>
        <end position="6"/>
    </location>
</feature>
<feature type="splice variant" id="VSP_007190" description="In isoform 2 and isoform 4." evidence="4">
    <location>
        <begin position="19"/>
        <end position="26"/>
    </location>
</feature>
<organism>
    <name type="scientific">Megaselia scalaris</name>
    <name type="common">Humpbacked fly</name>
    <name type="synonym">Phora scalaris</name>
    <dbReference type="NCBI Taxonomy" id="36166"/>
    <lineage>
        <taxon>Eukaryota</taxon>
        <taxon>Metazoa</taxon>
        <taxon>Ecdysozoa</taxon>
        <taxon>Arthropoda</taxon>
        <taxon>Hexapoda</taxon>
        <taxon>Insecta</taxon>
        <taxon>Pterygota</taxon>
        <taxon>Neoptera</taxon>
        <taxon>Endopterygota</taxon>
        <taxon>Diptera</taxon>
        <taxon>Brachycera</taxon>
        <taxon>Muscomorpha</taxon>
        <taxon>Platypezoidea</taxon>
        <taxon>Phoridae</taxon>
        <taxon>Megaseliini</taxon>
        <taxon>Megaselia</taxon>
    </lineage>
</organism>
<name>SXL_MEGSC</name>
<accession>O01671</accession>
<accession>O96931</accession>
<accession>Q9GVB9</accession>
<accession>Q9U536</accession>
<accession>Q9U537</accession>
<accession>Q9U5M7</accession>
<accession>Q9U5M8</accession>
<protein>
    <recommendedName>
        <fullName>Sex-lethal homolog</fullName>
    </recommendedName>
</protein>
<gene>
    <name type="primary">SXL</name>
    <name type="synonym">SXL2</name>
</gene>
<proteinExistence type="evidence at transcript level"/>
<keyword id="KW-0025">Alternative splicing</keyword>
<keyword id="KW-0539">Nucleus</keyword>
<keyword id="KW-1185">Reference proteome</keyword>
<keyword id="KW-0677">Repeat</keyword>
<keyword id="KW-0694">RNA-binding</keyword>